<dbReference type="EMBL" id="X91060">
    <property type="protein sequence ID" value="CAA62511.1"/>
    <property type="molecule type" value="mRNA"/>
</dbReference>
<dbReference type="EMBL" id="X91061">
    <property type="protein sequence ID" value="CAA62512.1"/>
    <property type="molecule type" value="mRNA"/>
</dbReference>
<dbReference type="EMBL" id="AF030959">
    <property type="protein sequence ID" value="AAC64659.1"/>
    <property type="molecule type" value="Genomic_DNA"/>
</dbReference>
<dbReference type="EMBL" id="AY224619">
    <property type="protein sequence ID" value="AAO72478.1"/>
    <property type="molecule type" value="Genomic_DNA"/>
</dbReference>
<dbReference type="EMBL" id="AY224620">
    <property type="protein sequence ID" value="AAO72479.1"/>
    <property type="molecule type" value="Genomic_DNA"/>
</dbReference>
<dbReference type="EMBL" id="AY224621">
    <property type="protein sequence ID" value="AAO72480.1"/>
    <property type="molecule type" value="Genomic_DNA"/>
</dbReference>
<dbReference type="EMBL" id="AY224622">
    <property type="protein sequence ID" value="AAO72481.1"/>
    <property type="molecule type" value="Genomic_DNA"/>
</dbReference>
<dbReference type="EMBL" id="AY224623">
    <property type="protein sequence ID" value="AAO72482.1"/>
    <property type="molecule type" value="Genomic_DNA"/>
</dbReference>
<dbReference type="EMBL" id="AY224624">
    <property type="protein sequence ID" value="AAO72483.1"/>
    <property type="molecule type" value="Genomic_DNA"/>
</dbReference>
<dbReference type="EMBL" id="AY224625">
    <property type="protein sequence ID" value="AAO72484.1"/>
    <property type="molecule type" value="Genomic_DNA"/>
</dbReference>
<dbReference type="EMBL" id="AY224626">
    <property type="protein sequence ID" value="AAO72485.1"/>
    <property type="molecule type" value="Genomic_DNA"/>
</dbReference>
<dbReference type="EMBL" id="AY224627">
    <property type="protein sequence ID" value="AAO72486.1"/>
    <property type="molecule type" value="Genomic_DNA"/>
</dbReference>
<dbReference type="EMBL" id="AY224628">
    <property type="protein sequence ID" value="AAO72487.1"/>
    <property type="molecule type" value="Genomic_DNA"/>
</dbReference>
<dbReference type="EMBL" id="AY224629">
    <property type="protein sequence ID" value="AAO72488.1"/>
    <property type="molecule type" value="Genomic_DNA"/>
</dbReference>
<dbReference type="EMBL" id="AY224630">
    <property type="protein sequence ID" value="AAO72489.1"/>
    <property type="molecule type" value="Genomic_DNA"/>
</dbReference>
<dbReference type="EMBL" id="AE013599">
    <property type="protein sequence ID" value="AAF58139.1"/>
    <property type="molecule type" value="Genomic_DNA"/>
</dbReference>
<dbReference type="EMBL" id="AY075536">
    <property type="protein sequence ID" value="AAL68343.1"/>
    <property type="molecule type" value="mRNA"/>
</dbReference>
<dbReference type="PIR" id="S63981">
    <property type="entry name" value="S63981"/>
</dbReference>
<dbReference type="RefSeq" id="NP_523752.1">
    <property type="nucleotide sequence ID" value="NM_079028.3"/>
</dbReference>
<dbReference type="PDB" id="4EZS">
    <property type="method" value="X-ray"/>
    <property type="resolution" value="1.90 A"/>
    <property type="chains" value="B=46-52"/>
</dbReference>
<dbReference type="PDBsum" id="4EZS"/>
<dbReference type="SMR" id="Q24395"/>
<dbReference type="DIP" id="DIP-23804N"/>
<dbReference type="FunCoup" id="Q24395">
    <property type="interactions" value="6"/>
</dbReference>
<dbReference type="STRING" id="7227.FBpp0086518"/>
<dbReference type="PaxDb" id="7227-FBpp0086518"/>
<dbReference type="DNASU" id="36708"/>
<dbReference type="EnsemblMetazoa" id="FBtr0087386">
    <property type="protein sequence ID" value="FBpp0086518"/>
    <property type="gene ID" value="FBgn0014865"/>
</dbReference>
<dbReference type="GeneID" id="36708"/>
<dbReference type="KEGG" id="dme:Dmel_CG8175"/>
<dbReference type="AGR" id="FB:FBgn0014865"/>
<dbReference type="CTD" id="36708"/>
<dbReference type="FlyBase" id="FBgn0014865">
    <property type="gene designation" value="Mtk"/>
</dbReference>
<dbReference type="VEuPathDB" id="VectorBase:FBgn0014865"/>
<dbReference type="eggNOG" id="ENOG502T9AQ">
    <property type="taxonomic scope" value="Eukaryota"/>
</dbReference>
<dbReference type="HOGENOM" id="CLU_214043_0_0_1"/>
<dbReference type="InParanoid" id="Q24395"/>
<dbReference type="OMA" id="SEPHRHQ"/>
<dbReference type="OrthoDB" id="7861148at2759"/>
<dbReference type="PhylomeDB" id="Q24395"/>
<dbReference type="BioGRID-ORCS" id="36708">
    <property type="hits" value="0 hits in 1 CRISPR screen"/>
</dbReference>
<dbReference type="EvolutionaryTrace" id="Q24395"/>
<dbReference type="GenomeRNAi" id="36708"/>
<dbReference type="PRO" id="PR:Q24395"/>
<dbReference type="Proteomes" id="UP000000803">
    <property type="component" value="Chromosome 2R"/>
</dbReference>
<dbReference type="Bgee" id="FBgn0014865">
    <property type="expression patterns" value="Expressed in head capsule and 70 other cell types or tissues"/>
</dbReference>
<dbReference type="GO" id="GO:0005576">
    <property type="term" value="C:extracellular region"/>
    <property type="evidence" value="ECO:0000314"/>
    <property type="project" value="FlyBase"/>
</dbReference>
<dbReference type="GO" id="GO:0019731">
    <property type="term" value="P:antibacterial humoral response"/>
    <property type="evidence" value="ECO:0000270"/>
    <property type="project" value="FlyBase"/>
</dbReference>
<dbReference type="GO" id="GO:0019732">
    <property type="term" value="P:antifungal humoral response"/>
    <property type="evidence" value="ECO:0000270"/>
    <property type="project" value="FlyBase"/>
</dbReference>
<dbReference type="GO" id="GO:0006952">
    <property type="term" value="P:defense response"/>
    <property type="evidence" value="ECO:0000314"/>
    <property type="project" value="FlyBase"/>
</dbReference>
<dbReference type="GO" id="GO:0050832">
    <property type="term" value="P:defense response to fungus"/>
    <property type="evidence" value="ECO:0000314"/>
    <property type="project" value="FlyBase"/>
</dbReference>
<dbReference type="GO" id="GO:0050829">
    <property type="term" value="P:defense response to Gram-negative bacterium"/>
    <property type="evidence" value="ECO:0000315"/>
    <property type="project" value="FlyBase"/>
</dbReference>
<dbReference type="GO" id="GO:0050830">
    <property type="term" value="P:defense response to Gram-positive bacterium"/>
    <property type="evidence" value="ECO:0000314"/>
    <property type="project" value="FlyBase"/>
</dbReference>
<dbReference type="GO" id="GO:0045087">
    <property type="term" value="P:innate immune response"/>
    <property type="evidence" value="ECO:0007669"/>
    <property type="project" value="UniProtKB-KW"/>
</dbReference>
<dbReference type="GO" id="GO:0031640">
    <property type="term" value="P:killing of cells of another organism"/>
    <property type="evidence" value="ECO:0007669"/>
    <property type="project" value="UniProtKB-KW"/>
</dbReference>
<dbReference type="GO" id="GO:0009617">
    <property type="term" value="P:response to bacterium"/>
    <property type="evidence" value="ECO:0000314"/>
    <property type="project" value="FlyBase"/>
</dbReference>
<dbReference type="GO" id="GO:0009611">
    <property type="term" value="P:response to wounding"/>
    <property type="evidence" value="ECO:0000270"/>
    <property type="project" value="FlyBase"/>
</dbReference>
<dbReference type="InterPro" id="IPR012513">
    <property type="entry name" value="Mtk"/>
</dbReference>
<dbReference type="Pfam" id="PF08105">
    <property type="entry name" value="Antimicrobial10"/>
    <property type="match status" value="1"/>
</dbReference>
<keyword id="KW-0002">3D-structure</keyword>
<keyword id="KW-0044">Antibiotic</keyword>
<keyword id="KW-0929">Antimicrobial</keyword>
<keyword id="KW-0903">Direct protein sequencing</keyword>
<keyword id="KW-0295">Fungicide</keyword>
<keyword id="KW-0391">Immunity</keyword>
<keyword id="KW-0399">Innate immunity</keyword>
<keyword id="KW-1185">Reference proteome</keyword>
<keyword id="KW-0964">Secreted</keyword>
<keyword id="KW-0732">Signal</keyword>
<sequence>MQLNLGAIFLALLGVMATATSVLAEPHRHQGPIFDTRPSPFNPNQPRPGPIY</sequence>
<comment type="function">
    <text>Potent antifungal and antibacterial activity against Gram-positive bacteria.</text>
</comment>
<comment type="subcellular location">
    <subcellularLocation>
        <location evidence="5">Secreted</location>
    </subcellularLocation>
</comment>
<comment type="tissue specificity">
    <text evidence="4 5">Hemolymph (at protein level) (PubMed:9736738). Highest expression in fat body (PubMed:7588819).</text>
</comment>
<comment type="developmental stage">
    <text>Expressed rapidly and strongly at all stages.</text>
</comment>
<comment type="induction">
    <text evidence="5">By bacterial infection (at protein level) (PubMed:9736738). Up-regulated in hemolymph 6 hours after immune challenge, levels of expression increase for first 24 hours and persist for the following two weeks (at protein level) (PubMed:9736738).</text>
</comment>
<comment type="mass spectrometry">
    <text>Variant Arg-29.</text>
</comment>
<comment type="polymorphism">
    <text evidence="3">There are 2 allelic forms (A1 and A2) varying in two positions. The isoform shown here is A1.</text>
</comment>
<evidence type="ECO:0000255" key="1"/>
<evidence type="ECO:0000256" key="2">
    <source>
        <dbReference type="SAM" id="MobiDB-lite"/>
    </source>
</evidence>
<evidence type="ECO:0000269" key="3">
    <source>
    </source>
</evidence>
<evidence type="ECO:0000269" key="4">
    <source>
    </source>
</evidence>
<evidence type="ECO:0000269" key="5">
    <source>
    </source>
</evidence>
<evidence type="ECO:0000303" key="6">
    <source>
    </source>
</evidence>
<name>MTK_DROME</name>
<organism>
    <name type="scientific">Drosophila melanogaster</name>
    <name type="common">Fruit fly</name>
    <dbReference type="NCBI Taxonomy" id="7227"/>
    <lineage>
        <taxon>Eukaryota</taxon>
        <taxon>Metazoa</taxon>
        <taxon>Ecdysozoa</taxon>
        <taxon>Arthropoda</taxon>
        <taxon>Hexapoda</taxon>
        <taxon>Insecta</taxon>
        <taxon>Pterygota</taxon>
        <taxon>Neoptera</taxon>
        <taxon>Endopterygota</taxon>
        <taxon>Diptera</taxon>
        <taxon>Brachycera</taxon>
        <taxon>Muscomorpha</taxon>
        <taxon>Ephydroidea</taxon>
        <taxon>Drosophilidae</taxon>
        <taxon>Drosophila</taxon>
        <taxon>Sophophora</taxon>
    </lineage>
</organism>
<protein>
    <recommendedName>
        <fullName>Metchnikowin</fullName>
    </recommendedName>
</protein>
<feature type="signal peptide" evidence="1">
    <location>
        <begin position="1"/>
        <end position="24"/>
    </location>
</feature>
<feature type="propeptide" id="PRO_0000004983" evidence="4">
    <location>
        <begin position="25"/>
        <end position="26"/>
    </location>
</feature>
<feature type="peptide" id="PRO_0000004984" description="Metchnikowin">
    <location>
        <begin position="27"/>
        <end position="52"/>
    </location>
</feature>
<feature type="region of interest" description="Disordered" evidence="2">
    <location>
        <begin position="28"/>
        <end position="52"/>
    </location>
</feature>
<feature type="compositionally biased region" description="Pro residues" evidence="2">
    <location>
        <begin position="40"/>
        <end position="52"/>
    </location>
</feature>
<feature type="sequence variant" description="In strain: 2CPA51." evidence="3">
    <original>A</original>
    <variation>T</variation>
    <location>
        <position position="19"/>
    </location>
</feature>
<feature type="sequence variant" description="In strain: 2CPA51." evidence="3">
    <original>H</original>
    <variation>R</variation>
    <location>
        <position position="29"/>
    </location>
</feature>
<gene>
    <name type="primary">Mtk</name>
    <name type="ORF">CG8175</name>
</gene>
<proteinExistence type="evidence at protein level"/>
<reference key="1">
    <citation type="journal article" date="1995" name="Eur. J. Biochem.">
        <title>Metchnikowin, a novel immune-inducible proline-rich peptide from Drosophila with antibacterial and antifungal properties.</title>
        <authorList>
            <person name="Levashina E.A."/>
            <person name="Ohresser S."/>
            <person name="Bulet P."/>
            <person name="Reichhart J.-M."/>
            <person name="Hetru C."/>
            <person name="Hoffmann J.A."/>
        </authorList>
    </citation>
    <scope>NUCLEOTIDE SEQUENCE [MRNA]</scope>
    <scope>PROTEIN SEQUENCE OF 27-52</scope>
    <scope>TISSUE SPECIFICITY</scope>
    <source>
        <strain>Oregon-R</strain>
        <tissue>Abdomen</tissue>
        <tissue>Thorax</tissue>
    </source>
</reference>
<reference key="2">
    <citation type="journal article" date="1998" name="J. Mol. Biol.">
        <title>Two distinct pathways can control expression of the gene encoding the Drosophila antimicrobial peptide metchnikowin.</title>
        <authorList>
            <person name="Levashina E.A."/>
            <person name="Ohresser S."/>
            <person name="Lemaitre B."/>
            <person name="Imler J.-L."/>
        </authorList>
    </citation>
    <scope>NUCLEOTIDE SEQUENCE [GENOMIC DNA]</scope>
    <source>
        <strain>Oregon-R</strain>
    </source>
</reference>
<reference key="3">
    <citation type="journal article" date="2003" name="Mol. Biol. Evol.">
        <title>Molecular population genetics of inducible antibacterial peptide genes in Drosophila melanogaster.</title>
        <authorList>
            <person name="Lazzaro B.P."/>
            <person name="Clark A.G."/>
        </authorList>
    </citation>
    <scope>NUCLEOTIDE SEQUENCE</scope>
    <scope>VARIANTS THR-19 AND ARG-29</scope>
    <source>
        <strain>2CPA1</strain>
        <strain>2CPA103</strain>
        <strain>2CPA105</strain>
        <strain>2CPA118</strain>
        <strain>2CPA12</strain>
        <strain>2CPA122</strain>
        <strain>2CPA129</strain>
        <strain>2CPA14</strain>
        <strain>2CPA43</strain>
        <strain>2CPA46</strain>
        <strain>2CPA51</strain>
        <strain>2CPA7</strain>
    </source>
</reference>
<reference key="4">
    <citation type="journal article" date="2000" name="Science">
        <title>The genome sequence of Drosophila melanogaster.</title>
        <authorList>
            <person name="Adams M.D."/>
            <person name="Celniker S.E."/>
            <person name="Holt R.A."/>
            <person name="Evans C.A."/>
            <person name="Gocayne J.D."/>
            <person name="Amanatides P.G."/>
            <person name="Scherer S.E."/>
            <person name="Li P.W."/>
            <person name="Hoskins R.A."/>
            <person name="Galle R.F."/>
            <person name="George R.A."/>
            <person name="Lewis S.E."/>
            <person name="Richards S."/>
            <person name="Ashburner M."/>
            <person name="Henderson S.N."/>
            <person name="Sutton G.G."/>
            <person name="Wortman J.R."/>
            <person name="Yandell M.D."/>
            <person name="Zhang Q."/>
            <person name="Chen L.X."/>
            <person name="Brandon R.C."/>
            <person name="Rogers Y.-H.C."/>
            <person name="Blazej R.G."/>
            <person name="Champe M."/>
            <person name="Pfeiffer B.D."/>
            <person name="Wan K.H."/>
            <person name="Doyle C."/>
            <person name="Baxter E.G."/>
            <person name="Helt G."/>
            <person name="Nelson C.R."/>
            <person name="Miklos G.L.G."/>
            <person name="Abril J.F."/>
            <person name="Agbayani A."/>
            <person name="An H.-J."/>
            <person name="Andrews-Pfannkoch C."/>
            <person name="Baldwin D."/>
            <person name="Ballew R.M."/>
            <person name="Basu A."/>
            <person name="Baxendale J."/>
            <person name="Bayraktaroglu L."/>
            <person name="Beasley E.M."/>
            <person name="Beeson K.Y."/>
            <person name="Benos P.V."/>
            <person name="Berman B.P."/>
            <person name="Bhandari D."/>
            <person name="Bolshakov S."/>
            <person name="Borkova D."/>
            <person name="Botchan M.R."/>
            <person name="Bouck J."/>
            <person name="Brokstein P."/>
            <person name="Brottier P."/>
            <person name="Burtis K.C."/>
            <person name="Busam D.A."/>
            <person name="Butler H."/>
            <person name="Cadieu E."/>
            <person name="Center A."/>
            <person name="Chandra I."/>
            <person name="Cherry J.M."/>
            <person name="Cawley S."/>
            <person name="Dahlke C."/>
            <person name="Davenport L.B."/>
            <person name="Davies P."/>
            <person name="de Pablos B."/>
            <person name="Delcher A."/>
            <person name="Deng Z."/>
            <person name="Mays A.D."/>
            <person name="Dew I."/>
            <person name="Dietz S.M."/>
            <person name="Dodson K."/>
            <person name="Doup L.E."/>
            <person name="Downes M."/>
            <person name="Dugan-Rocha S."/>
            <person name="Dunkov B.C."/>
            <person name="Dunn P."/>
            <person name="Durbin K.J."/>
            <person name="Evangelista C.C."/>
            <person name="Ferraz C."/>
            <person name="Ferriera S."/>
            <person name="Fleischmann W."/>
            <person name="Fosler C."/>
            <person name="Gabrielian A.E."/>
            <person name="Garg N.S."/>
            <person name="Gelbart W.M."/>
            <person name="Glasser K."/>
            <person name="Glodek A."/>
            <person name="Gong F."/>
            <person name="Gorrell J.H."/>
            <person name="Gu Z."/>
            <person name="Guan P."/>
            <person name="Harris M."/>
            <person name="Harris N.L."/>
            <person name="Harvey D.A."/>
            <person name="Heiman T.J."/>
            <person name="Hernandez J.R."/>
            <person name="Houck J."/>
            <person name="Hostin D."/>
            <person name="Houston K.A."/>
            <person name="Howland T.J."/>
            <person name="Wei M.-H."/>
            <person name="Ibegwam C."/>
            <person name="Jalali M."/>
            <person name="Kalush F."/>
            <person name="Karpen G.H."/>
            <person name="Ke Z."/>
            <person name="Kennison J.A."/>
            <person name="Ketchum K.A."/>
            <person name="Kimmel B.E."/>
            <person name="Kodira C.D."/>
            <person name="Kraft C.L."/>
            <person name="Kravitz S."/>
            <person name="Kulp D."/>
            <person name="Lai Z."/>
            <person name="Lasko P."/>
            <person name="Lei Y."/>
            <person name="Levitsky A.A."/>
            <person name="Li J.H."/>
            <person name="Li Z."/>
            <person name="Liang Y."/>
            <person name="Lin X."/>
            <person name="Liu X."/>
            <person name="Mattei B."/>
            <person name="McIntosh T.C."/>
            <person name="McLeod M.P."/>
            <person name="McPherson D."/>
            <person name="Merkulov G."/>
            <person name="Milshina N.V."/>
            <person name="Mobarry C."/>
            <person name="Morris J."/>
            <person name="Moshrefi A."/>
            <person name="Mount S.M."/>
            <person name="Moy M."/>
            <person name="Murphy B."/>
            <person name="Murphy L."/>
            <person name="Muzny D.M."/>
            <person name="Nelson D.L."/>
            <person name="Nelson D.R."/>
            <person name="Nelson K.A."/>
            <person name="Nixon K."/>
            <person name="Nusskern D.R."/>
            <person name="Pacleb J.M."/>
            <person name="Palazzolo M."/>
            <person name="Pittman G.S."/>
            <person name="Pan S."/>
            <person name="Pollard J."/>
            <person name="Puri V."/>
            <person name="Reese M.G."/>
            <person name="Reinert K."/>
            <person name="Remington K."/>
            <person name="Saunders R.D.C."/>
            <person name="Scheeler F."/>
            <person name="Shen H."/>
            <person name="Shue B.C."/>
            <person name="Siden-Kiamos I."/>
            <person name="Simpson M."/>
            <person name="Skupski M.P."/>
            <person name="Smith T.J."/>
            <person name="Spier E."/>
            <person name="Spradling A.C."/>
            <person name="Stapleton M."/>
            <person name="Strong R."/>
            <person name="Sun E."/>
            <person name="Svirskas R."/>
            <person name="Tector C."/>
            <person name="Turner R."/>
            <person name="Venter E."/>
            <person name="Wang A.H."/>
            <person name="Wang X."/>
            <person name="Wang Z.-Y."/>
            <person name="Wassarman D.A."/>
            <person name="Weinstock G.M."/>
            <person name="Weissenbach J."/>
            <person name="Williams S.M."/>
            <person name="Woodage T."/>
            <person name="Worley K.C."/>
            <person name="Wu D."/>
            <person name="Yang S."/>
            <person name="Yao Q.A."/>
            <person name="Ye J."/>
            <person name="Yeh R.-F."/>
            <person name="Zaveri J.S."/>
            <person name="Zhan M."/>
            <person name="Zhang G."/>
            <person name="Zhao Q."/>
            <person name="Zheng L."/>
            <person name="Zheng X.H."/>
            <person name="Zhong F.N."/>
            <person name="Zhong W."/>
            <person name="Zhou X."/>
            <person name="Zhu S.C."/>
            <person name="Zhu X."/>
            <person name="Smith H.O."/>
            <person name="Gibbs R.A."/>
            <person name="Myers E.W."/>
            <person name="Rubin G.M."/>
            <person name="Venter J.C."/>
        </authorList>
    </citation>
    <scope>NUCLEOTIDE SEQUENCE [LARGE SCALE GENOMIC DNA]</scope>
    <source>
        <strain>Berkeley</strain>
    </source>
</reference>
<reference key="5">
    <citation type="journal article" date="2002" name="Genome Biol.">
        <title>Annotation of the Drosophila melanogaster euchromatic genome: a systematic review.</title>
        <authorList>
            <person name="Misra S."/>
            <person name="Crosby M.A."/>
            <person name="Mungall C.J."/>
            <person name="Matthews B.B."/>
            <person name="Campbell K.S."/>
            <person name="Hradecky P."/>
            <person name="Huang Y."/>
            <person name="Kaminker J.S."/>
            <person name="Millburn G.H."/>
            <person name="Prochnik S.E."/>
            <person name="Smith C.D."/>
            <person name="Tupy J.L."/>
            <person name="Whitfield E.J."/>
            <person name="Bayraktaroglu L."/>
            <person name="Berman B.P."/>
            <person name="Bettencourt B.R."/>
            <person name="Celniker S.E."/>
            <person name="de Grey A.D.N.J."/>
            <person name="Drysdale R.A."/>
            <person name="Harris N.L."/>
            <person name="Richter J."/>
            <person name="Russo S."/>
            <person name="Schroeder A.J."/>
            <person name="Shu S.Q."/>
            <person name="Stapleton M."/>
            <person name="Yamada C."/>
            <person name="Ashburner M."/>
            <person name="Gelbart W.M."/>
            <person name="Rubin G.M."/>
            <person name="Lewis S.E."/>
        </authorList>
    </citation>
    <scope>GENOME REANNOTATION</scope>
    <source>
        <strain>Berkeley</strain>
    </source>
</reference>
<reference key="6">
    <citation type="journal article" date="2002" name="Genome Biol.">
        <title>A Drosophila full-length cDNA resource.</title>
        <authorList>
            <person name="Stapleton M."/>
            <person name="Carlson J.W."/>
            <person name="Brokstein P."/>
            <person name="Yu C."/>
            <person name="Champe M."/>
            <person name="George R.A."/>
            <person name="Guarin H."/>
            <person name="Kronmiller B."/>
            <person name="Pacleb J.M."/>
            <person name="Park S."/>
            <person name="Wan K.H."/>
            <person name="Rubin G.M."/>
            <person name="Celniker S.E."/>
        </authorList>
    </citation>
    <scope>NUCLEOTIDE SEQUENCE [LARGE SCALE MRNA]</scope>
    <source>
        <strain>Berkeley</strain>
        <tissue>Head</tissue>
    </source>
</reference>
<reference key="7">
    <citation type="journal article" date="1998" name="Proc. Natl. Acad. Sci. U.S.A.">
        <title>Differential display of peptides induced during the immune response of Drosophila: a matrix-assisted laser desorption ionization time-of-flight mass spectrometry study.</title>
        <authorList>
            <person name="Uttenweiler-Joseph S."/>
            <person name="Moniatte M."/>
            <person name="Lagueux M."/>
            <person name="van Dorsselaer A."/>
            <person name="Hoffmann J.A."/>
            <person name="Bulet P."/>
        </authorList>
    </citation>
    <scope>SUBCELLULAR LOCATION</scope>
    <scope>TISSUE SPECIFICITY</scope>
    <scope>INDUCTION BY BACTERIA</scope>
    <scope>MASS SPECTROMETRY</scope>
    <source>
        <strain evidence="6">Oregon-R</strain>
        <tissue evidence="6">Hemolymph</tissue>
    </source>
</reference>
<accession>Q24395</accession>
<accession>Q24396</accession>
<accession>Q86BV8</accession>
<accession>Q9V7B9</accession>